<comment type="function">
    <text evidence="1">Catalyzes the condensation of para-aminobenzoate (pABA) with 6-hydroxymethyl-7,8-dihydropterin diphosphate (DHPt-PP) to form 7,8-dihydropteroate (H2Pte), the immediate precursor of folate derivatives.</text>
</comment>
<comment type="catalytic activity">
    <reaction evidence="1">
        <text>(7,8-dihydropterin-6-yl)methyl diphosphate + 4-aminobenzoate = 7,8-dihydropteroate + diphosphate</text>
        <dbReference type="Rhea" id="RHEA:19949"/>
        <dbReference type="ChEBI" id="CHEBI:17836"/>
        <dbReference type="ChEBI" id="CHEBI:17839"/>
        <dbReference type="ChEBI" id="CHEBI:33019"/>
        <dbReference type="ChEBI" id="CHEBI:72950"/>
        <dbReference type="EC" id="2.5.1.15"/>
    </reaction>
</comment>
<comment type="cofactor">
    <cofactor evidence="1">
        <name>Mg(2+)</name>
        <dbReference type="ChEBI" id="CHEBI:18420"/>
    </cofactor>
</comment>
<comment type="pathway">
    <text>Cofactor biosynthesis; tetrahydrofolate biosynthesis; 7,8-dihydrofolate from 2-amino-4-hydroxy-6-hydroxymethyl-7,8-dihydropteridine diphosphate and 4-aminobenzoate: step 1/2.</text>
</comment>
<comment type="subunit">
    <text evidence="4">Homodimer.</text>
</comment>
<comment type="similarity">
    <text evidence="4">Belongs to the DHPS family.</text>
</comment>
<sequence length="271" mass="28470">MNKSLIIFGIVNITSDSFSDGGRYLAPDAAIAQARKLMAEGADVIDLGPASSNPDAAPVSSDTEIARIAPVLDALKADGIPVSLDSYQPATQAYALSRGVAYLNDIRGFPDAAFYPQLAKSSAKLVVMHSVQDGQADRREAPAGDIMDHIAAFFDARIAALTGAGIKRNRLVLDPGMGFFLGAAPETSLSVLARFDELRLRFDLPVLLSVSRKSFLRALTGRGPGDVGAATLAAELAAAAGGADFIRTHEPRPLRDGLAVLAALKETARIR</sequence>
<name>DHP2_SHIFL</name>
<feature type="chain" id="PRO_0000168204" description="Dihydropteroate synthase type-2">
    <location>
        <begin position="1"/>
        <end position="271"/>
    </location>
</feature>
<feature type="domain" description="Pterin-binding" evidence="3">
    <location>
        <begin position="1"/>
        <end position="259"/>
    </location>
</feature>
<feature type="binding site" evidence="2">
    <location>
        <position position="12"/>
    </location>
    <ligand>
        <name>Mg(2+)</name>
        <dbReference type="ChEBI" id="CHEBI:18420"/>
    </ligand>
</feature>
<feature type="binding site" evidence="1">
    <location>
        <position position="85"/>
    </location>
    <ligand>
        <name>(7,8-dihydropterin-6-yl)methyl diphosphate</name>
        <dbReference type="ChEBI" id="CHEBI:72950"/>
    </ligand>
</feature>
<feature type="binding site" evidence="1">
    <location>
        <position position="104"/>
    </location>
    <ligand>
        <name>(7,8-dihydropterin-6-yl)methyl diphosphate</name>
        <dbReference type="ChEBI" id="CHEBI:72950"/>
    </ligand>
</feature>
<feature type="binding site" evidence="1">
    <location>
        <position position="174"/>
    </location>
    <ligand>
        <name>(7,8-dihydropterin-6-yl)methyl diphosphate</name>
        <dbReference type="ChEBI" id="CHEBI:72950"/>
    </ligand>
</feature>
<feature type="binding site" evidence="1">
    <location>
        <position position="213"/>
    </location>
    <ligand>
        <name>(7,8-dihydropterin-6-yl)methyl diphosphate</name>
        <dbReference type="ChEBI" id="CHEBI:72950"/>
    </ligand>
</feature>
<feature type="binding site" evidence="1">
    <location>
        <begin position="247"/>
        <end position="249"/>
    </location>
    <ligand>
        <name>(7,8-dihydropterin-6-yl)methyl diphosphate</name>
        <dbReference type="ChEBI" id="CHEBI:72950"/>
    </ligand>
</feature>
<reference key="1">
    <citation type="journal article" date="2003" name="Infect. Immun.">
        <title>Complete genome sequence and comparative genomics of Shigella flexneri serotype 2a strain 2457T.</title>
        <authorList>
            <person name="Wei J."/>
            <person name="Goldberg M.B."/>
            <person name="Burland V."/>
            <person name="Venkatesan M.M."/>
            <person name="Deng W."/>
            <person name="Fournier G."/>
            <person name="Mayhew G.F."/>
            <person name="Plunkett G. III"/>
            <person name="Rose D.J."/>
            <person name="Darling A."/>
            <person name="Mau B."/>
            <person name="Perna N.T."/>
            <person name="Payne S.M."/>
            <person name="Runyen-Janecky L.J."/>
            <person name="Zhou S."/>
            <person name="Schwartz D.C."/>
            <person name="Blattner F.R."/>
        </authorList>
    </citation>
    <scope>NUCLEOTIDE SEQUENCE [LARGE SCALE GENOMIC DNA]</scope>
    <source>
        <strain>ATCC 700930 / 2457T / Serotype 2a</strain>
    </source>
</reference>
<evidence type="ECO:0000250" key="1">
    <source>
        <dbReference type="UniProtKB" id="P0AC13"/>
    </source>
</evidence>
<evidence type="ECO:0000250" key="2">
    <source>
        <dbReference type="UniProtKB" id="P9WND1"/>
    </source>
</evidence>
<evidence type="ECO:0000255" key="3">
    <source>
        <dbReference type="PROSITE-ProRule" id="PRU00334"/>
    </source>
</evidence>
<evidence type="ECO:0000305" key="4"/>
<accession>P0AC12</accession>
<accession>P19539</accession>
<proteinExistence type="inferred from homology"/>
<dbReference type="EC" id="2.5.1.15"/>
<dbReference type="EMBL" id="AE014073">
    <property type="protein sequence ID" value="AAP17863.1"/>
    <property type="molecule type" value="Genomic_DNA"/>
</dbReference>
<dbReference type="SMR" id="P0AC12"/>
<dbReference type="CARD" id="ARO:3000412">
    <property type="molecule name" value="sul2"/>
    <property type="mechanism identifier" value="ARO:0001002"/>
    <property type="mechanism name" value="antibiotic target replacement"/>
</dbReference>
<dbReference type="KEGG" id="sfx:S2703"/>
<dbReference type="HOGENOM" id="CLU_008023_0_3_6"/>
<dbReference type="UniPathway" id="UPA00077">
    <property type="reaction ID" value="UER00156"/>
</dbReference>
<dbReference type="Proteomes" id="UP000002673">
    <property type="component" value="Chromosome"/>
</dbReference>
<dbReference type="GO" id="GO:0005829">
    <property type="term" value="C:cytosol"/>
    <property type="evidence" value="ECO:0007669"/>
    <property type="project" value="TreeGrafter"/>
</dbReference>
<dbReference type="GO" id="GO:0004156">
    <property type="term" value="F:dihydropteroate synthase activity"/>
    <property type="evidence" value="ECO:0007669"/>
    <property type="project" value="UniProtKB-EC"/>
</dbReference>
<dbReference type="GO" id="GO:0046872">
    <property type="term" value="F:metal ion binding"/>
    <property type="evidence" value="ECO:0007669"/>
    <property type="project" value="UniProtKB-KW"/>
</dbReference>
<dbReference type="GO" id="GO:0046656">
    <property type="term" value="P:folic acid biosynthetic process"/>
    <property type="evidence" value="ECO:0007669"/>
    <property type="project" value="UniProtKB-KW"/>
</dbReference>
<dbReference type="GO" id="GO:0046654">
    <property type="term" value="P:tetrahydrofolate biosynthetic process"/>
    <property type="evidence" value="ECO:0007669"/>
    <property type="project" value="UniProtKB-UniPathway"/>
</dbReference>
<dbReference type="CDD" id="cd00739">
    <property type="entry name" value="DHPS"/>
    <property type="match status" value="1"/>
</dbReference>
<dbReference type="Gene3D" id="3.20.20.20">
    <property type="entry name" value="Dihydropteroate synthase-like"/>
    <property type="match status" value="1"/>
</dbReference>
<dbReference type="InterPro" id="IPR045031">
    <property type="entry name" value="DHP_synth-like"/>
</dbReference>
<dbReference type="InterPro" id="IPR006390">
    <property type="entry name" value="DHP_synth_dom"/>
</dbReference>
<dbReference type="InterPro" id="IPR011005">
    <property type="entry name" value="Dihydropteroate_synth-like_sf"/>
</dbReference>
<dbReference type="InterPro" id="IPR000489">
    <property type="entry name" value="Pterin-binding_dom"/>
</dbReference>
<dbReference type="NCBIfam" id="TIGR01496">
    <property type="entry name" value="DHPS"/>
    <property type="match status" value="1"/>
</dbReference>
<dbReference type="NCBIfam" id="NF000295">
    <property type="entry name" value="Sul2"/>
    <property type="match status" value="1"/>
</dbReference>
<dbReference type="PANTHER" id="PTHR20941">
    <property type="entry name" value="FOLATE SYNTHESIS PROTEINS"/>
    <property type="match status" value="1"/>
</dbReference>
<dbReference type="PANTHER" id="PTHR20941:SF1">
    <property type="entry name" value="FOLIC ACID SYNTHESIS PROTEIN FOL1"/>
    <property type="match status" value="1"/>
</dbReference>
<dbReference type="Pfam" id="PF00809">
    <property type="entry name" value="Pterin_bind"/>
    <property type="match status" value="1"/>
</dbReference>
<dbReference type="SUPFAM" id="SSF51717">
    <property type="entry name" value="Dihydropteroate synthetase-like"/>
    <property type="match status" value="1"/>
</dbReference>
<dbReference type="PROSITE" id="PS00792">
    <property type="entry name" value="DHPS_1"/>
    <property type="match status" value="1"/>
</dbReference>
<dbReference type="PROSITE" id="PS00793">
    <property type="entry name" value="DHPS_2"/>
    <property type="match status" value="1"/>
</dbReference>
<dbReference type="PROSITE" id="PS50972">
    <property type="entry name" value="PTERIN_BINDING"/>
    <property type="match status" value="1"/>
</dbReference>
<organism>
    <name type="scientific">Shigella flexneri</name>
    <dbReference type="NCBI Taxonomy" id="623"/>
    <lineage>
        <taxon>Bacteria</taxon>
        <taxon>Pseudomonadati</taxon>
        <taxon>Pseudomonadota</taxon>
        <taxon>Gammaproteobacteria</taxon>
        <taxon>Enterobacterales</taxon>
        <taxon>Enterobacteriaceae</taxon>
        <taxon>Shigella</taxon>
    </lineage>
</organism>
<gene>
    <name type="primary">sulII</name>
    <name type="ordered locus">S2703</name>
</gene>
<protein>
    <recommendedName>
        <fullName>Dihydropteroate synthase type-2</fullName>
        <ecNumber>2.5.1.15</ecNumber>
    </recommendedName>
    <alternativeName>
        <fullName>Dihydropteroate pyrophosphorylase type II</fullName>
    </alternativeName>
    <alternativeName>
        <fullName>Dihydropteroate synthase type II</fullName>
        <shortName>DHPS</shortName>
    </alternativeName>
</protein>
<keyword id="KW-0289">Folate biosynthesis</keyword>
<keyword id="KW-0460">Magnesium</keyword>
<keyword id="KW-0479">Metal-binding</keyword>
<keyword id="KW-0808">Transferase</keyword>